<organism>
    <name type="scientific">Androctonus australis</name>
    <name type="common">Sahara scorpion</name>
    <dbReference type="NCBI Taxonomy" id="6858"/>
    <lineage>
        <taxon>Eukaryota</taxon>
        <taxon>Metazoa</taxon>
        <taxon>Ecdysozoa</taxon>
        <taxon>Arthropoda</taxon>
        <taxon>Chelicerata</taxon>
        <taxon>Arachnida</taxon>
        <taxon>Scorpiones</taxon>
        <taxon>Buthida</taxon>
        <taxon>Buthoidea</taxon>
        <taxon>Buthidae</taxon>
        <taxon>Androctonus</taxon>
    </lineage>
</organism>
<reference evidence="3 5" key="1">
    <citation type="journal article" date="2005" name="Biochem. Biophys. Res. Commun.">
        <title>New 'birtoxin analogs' from Androctonus australis venom.</title>
        <authorList>
            <person name="Martin-Eauclaire M.-F."/>
            <person name="Ceard B."/>
            <person name="Bosmans F."/>
            <person name="Rosso J.-P."/>
            <person name="Tytgat J."/>
            <person name="Bougis P.E."/>
        </authorList>
    </citation>
    <scope>NUCLEOTIDE SEQUENCE [MRNA]</scope>
    <scope>PROTEIN SEQUENCE OF 23-35</scope>
    <scope>FUNCTION</scope>
    <scope>SUBCELLULAR LOCATION</scope>
    <scope>TISSUE SPECIFICITY</scope>
    <source>
        <tissue evidence="2">Venom</tissue>
        <tissue evidence="2">Venom gland</tissue>
    </source>
</reference>
<comment type="function">
    <text evidence="2">Shifts the voltage of activation of para/tipE voltage-dependent sodium channels (Nav) toward more negative potentials.</text>
</comment>
<comment type="subcellular location">
    <subcellularLocation>
        <location evidence="2">Secreted</location>
    </subcellularLocation>
</comment>
<comment type="tissue specificity">
    <text evidence="2">Expressed by the venom gland.</text>
</comment>
<comment type="domain">
    <text evidence="3">Has the structural arrangement of an alpha-helix connected to antiparallel beta-sheets by disulfide bonds (CS-alpha/beta).</text>
</comment>
<comment type="miscellaneous">
    <text evidence="4">Negative results: is totally devoid of toxicity when intracerebroventricularly injected into mice and does not compete with radiolabeled voltage-gated potassium and sodium channel toxins in binding experiments on rat brain synaptosomes.</text>
</comment>
<comment type="similarity">
    <text evidence="3">Belongs to the long (3 C-C) scorpion toxin superfamily. Sodium channel inhibitor family. Beta subfamily.</text>
</comment>
<keyword id="KW-0903">Direct protein sequencing</keyword>
<keyword id="KW-1015">Disulfide bond</keyword>
<keyword id="KW-0872">Ion channel impairing toxin</keyword>
<keyword id="KW-0528">Neurotoxin</keyword>
<keyword id="KW-0964">Secreted</keyword>
<keyword id="KW-0732">Signal</keyword>
<keyword id="KW-0800">Toxin</keyword>
<keyword id="KW-0738">Voltage-gated sodium channel impairing toxin</keyword>
<feature type="signal peptide" evidence="2">
    <location>
        <begin position="1"/>
        <end position="22"/>
    </location>
</feature>
<feature type="chain" id="PRO_0000228821" description="Beta-insect toxin AaBTxL1">
    <location>
        <begin position="23"/>
        <end position="82"/>
    </location>
</feature>
<feature type="domain" description="LCN-type CS-alpha/beta" evidence="1">
    <location>
        <begin position="25"/>
        <end position="82"/>
    </location>
</feature>
<feature type="disulfide bond" evidence="1">
    <location>
        <begin position="40"/>
        <end position="64"/>
    </location>
</feature>
<feature type="disulfide bond" evidence="1">
    <location>
        <begin position="50"/>
        <end position="69"/>
    </location>
</feature>
<feature type="disulfide bond" evidence="1">
    <location>
        <begin position="54"/>
        <end position="71"/>
    </location>
</feature>
<feature type="sequence conflict" description="In Ref. 1; AA sequence." evidence="3" ref="1">
    <original>S</original>
    <variation>SS</variation>
    <location>
        <position position="34"/>
    </location>
</feature>
<evidence type="ECO:0000255" key="1">
    <source>
        <dbReference type="PROSITE-ProRule" id="PRU01210"/>
    </source>
</evidence>
<evidence type="ECO:0000269" key="2">
    <source>
    </source>
</evidence>
<evidence type="ECO:0000305" key="3"/>
<evidence type="ECO:0000305" key="4">
    <source>
    </source>
</evidence>
<evidence type="ECO:0000312" key="5">
    <source>
        <dbReference type="EMBL" id="CAH03780.1"/>
    </source>
</evidence>
<dbReference type="EMBL" id="AJ781834">
    <property type="protein sequence ID" value="CAH03780.1"/>
    <property type="molecule type" value="mRNA"/>
</dbReference>
<dbReference type="SMR" id="Q4LCS8"/>
<dbReference type="GO" id="GO:0005576">
    <property type="term" value="C:extracellular region"/>
    <property type="evidence" value="ECO:0000314"/>
    <property type="project" value="UniProtKB"/>
</dbReference>
<dbReference type="GO" id="GO:0008200">
    <property type="term" value="F:ion channel inhibitor activity"/>
    <property type="evidence" value="ECO:0000314"/>
    <property type="project" value="UniProtKB"/>
</dbReference>
<dbReference type="GO" id="GO:0019871">
    <property type="term" value="F:sodium channel inhibitor activity"/>
    <property type="evidence" value="ECO:0000314"/>
    <property type="project" value="UniProtKB"/>
</dbReference>
<dbReference type="GO" id="GO:0090729">
    <property type="term" value="F:toxin activity"/>
    <property type="evidence" value="ECO:0007669"/>
    <property type="project" value="UniProtKB-KW"/>
</dbReference>
<dbReference type="CDD" id="cd23106">
    <property type="entry name" value="neurotoxins_LC_scorpion"/>
    <property type="match status" value="1"/>
</dbReference>
<dbReference type="FunFam" id="3.30.30.10:FF:000008">
    <property type="entry name" value="Toxin-like peptide AaF1CA7"/>
    <property type="match status" value="1"/>
</dbReference>
<dbReference type="Gene3D" id="3.30.30.10">
    <property type="entry name" value="Knottin, scorpion toxin-like"/>
    <property type="match status" value="1"/>
</dbReference>
<dbReference type="InterPro" id="IPR044062">
    <property type="entry name" value="LCN-type_CS_alpha_beta_dom"/>
</dbReference>
<dbReference type="InterPro" id="IPR036574">
    <property type="entry name" value="Scorpion_toxin-like_sf"/>
</dbReference>
<dbReference type="InterPro" id="IPR002061">
    <property type="entry name" value="Scorpion_toxinL/defensin"/>
</dbReference>
<dbReference type="Pfam" id="PF00537">
    <property type="entry name" value="Toxin_3"/>
    <property type="match status" value="1"/>
</dbReference>
<dbReference type="SUPFAM" id="SSF57095">
    <property type="entry name" value="Scorpion toxin-like"/>
    <property type="match status" value="1"/>
</dbReference>
<dbReference type="PROSITE" id="PS51863">
    <property type="entry name" value="LCN_CSAB"/>
    <property type="match status" value="1"/>
</dbReference>
<proteinExistence type="evidence at protein level"/>
<sequence length="82" mass="9425">MMKLVLFSVIVILFSLIGSIHGADVPGNYPLDRSGKKYPCTITWKKNPSCIQICKKHGVKYGYCFDFQCWCEIFGRLKTFKI</sequence>
<accession>Q4LCS8</accession>
<name>TXA25_ANDAU</name>
<protein>
    <recommendedName>
        <fullName>Beta-insect toxin AaBTxL1</fullName>
    </recommendedName>
    <alternativeName>
        <fullName>Neurotoxin AaBTX-L1</fullName>
    </alternativeName>
    <alternativeName>
        <fullName>Peptide AaF1CA25</fullName>
    </alternativeName>
</protein>